<name>SYGA_BRADU</name>
<dbReference type="EC" id="6.1.1.14" evidence="1"/>
<dbReference type="EMBL" id="BA000040">
    <property type="protein sequence ID" value="BAC47800.1"/>
    <property type="molecule type" value="Genomic_DNA"/>
</dbReference>
<dbReference type="RefSeq" id="NP_769175.1">
    <property type="nucleotide sequence ID" value="NC_004463.1"/>
</dbReference>
<dbReference type="RefSeq" id="WP_011085322.1">
    <property type="nucleotide sequence ID" value="NC_004463.1"/>
</dbReference>
<dbReference type="SMR" id="Q89S70"/>
<dbReference type="FunCoup" id="Q89S70">
    <property type="interactions" value="454"/>
</dbReference>
<dbReference type="STRING" id="224911.AAV28_09615"/>
<dbReference type="EnsemblBacteria" id="BAC47800">
    <property type="protein sequence ID" value="BAC47800"/>
    <property type="gene ID" value="BAC47800"/>
</dbReference>
<dbReference type="GeneID" id="46489577"/>
<dbReference type="KEGG" id="bja:blr2535"/>
<dbReference type="PATRIC" id="fig|224911.44.peg.2115"/>
<dbReference type="eggNOG" id="COG0752">
    <property type="taxonomic scope" value="Bacteria"/>
</dbReference>
<dbReference type="HOGENOM" id="CLU_057066_1_0_5"/>
<dbReference type="InParanoid" id="Q89S70"/>
<dbReference type="OrthoDB" id="9802183at2"/>
<dbReference type="PhylomeDB" id="Q89S70"/>
<dbReference type="Proteomes" id="UP000002526">
    <property type="component" value="Chromosome"/>
</dbReference>
<dbReference type="GO" id="GO:0005737">
    <property type="term" value="C:cytoplasm"/>
    <property type="evidence" value="ECO:0007669"/>
    <property type="project" value="UniProtKB-SubCell"/>
</dbReference>
<dbReference type="GO" id="GO:0005524">
    <property type="term" value="F:ATP binding"/>
    <property type="evidence" value="ECO:0007669"/>
    <property type="project" value="UniProtKB-UniRule"/>
</dbReference>
<dbReference type="GO" id="GO:0004820">
    <property type="term" value="F:glycine-tRNA ligase activity"/>
    <property type="evidence" value="ECO:0007669"/>
    <property type="project" value="UniProtKB-UniRule"/>
</dbReference>
<dbReference type="GO" id="GO:0006426">
    <property type="term" value="P:glycyl-tRNA aminoacylation"/>
    <property type="evidence" value="ECO:0007669"/>
    <property type="project" value="UniProtKB-UniRule"/>
</dbReference>
<dbReference type="CDD" id="cd00733">
    <property type="entry name" value="GlyRS_alpha_core"/>
    <property type="match status" value="1"/>
</dbReference>
<dbReference type="FunFam" id="3.30.930.10:FF:000006">
    <property type="entry name" value="Glycine--tRNA ligase alpha subunit"/>
    <property type="match status" value="1"/>
</dbReference>
<dbReference type="Gene3D" id="3.30.930.10">
    <property type="entry name" value="Bira Bifunctional Protein, Domain 2"/>
    <property type="match status" value="1"/>
</dbReference>
<dbReference type="Gene3D" id="1.20.58.180">
    <property type="entry name" value="Class II aaRS and biotin synthetases, domain 2"/>
    <property type="match status" value="1"/>
</dbReference>
<dbReference type="HAMAP" id="MF_00254">
    <property type="entry name" value="Gly_tRNA_synth_alpha"/>
    <property type="match status" value="1"/>
</dbReference>
<dbReference type="InterPro" id="IPR045864">
    <property type="entry name" value="aa-tRNA-synth_II/BPL/LPL"/>
</dbReference>
<dbReference type="InterPro" id="IPR006194">
    <property type="entry name" value="Gly-tRNA-synth_heterodimer"/>
</dbReference>
<dbReference type="InterPro" id="IPR002310">
    <property type="entry name" value="Gly-tRNA_ligase_asu"/>
</dbReference>
<dbReference type="NCBIfam" id="TIGR00388">
    <property type="entry name" value="glyQ"/>
    <property type="match status" value="1"/>
</dbReference>
<dbReference type="NCBIfam" id="NF006827">
    <property type="entry name" value="PRK09348.1"/>
    <property type="match status" value="1"/>
</dbReference>
<dbReference type="PANTHER" id="PTHR30075:SF2">
    <property type="entry name" value="GLYCINE--TRNA LIGASE, CHLOROPLASTIC_MITOCHONDRIAL 2"/>
    <property type="match status" value="1"/>
</dbReference>
<dbReference type="PANTHER" id="PTHR30075">
    <property type="entry name" value="GLYCYL-TRNA SYNTHETASE"/>
    <property type="match status" value="1"/>
</dbReference>
<dbReference type="Pfam" id="PF02091">
    <property type="entry name" value="tRNA-synt_2e"/>
    <property type="match status" value="1"/>
</dbReference>
<dbReference type="PRINTS" id="PR01044">
    <property type="entry name" value="TRNASYNTHGA"/>
</dbReference>
<dbReference type="SUPFAM" id="SSF55681">
    <property type="entry name" value="Class II aaRS and biotin synthetases"/>
    <property type="match status" value="1"/>
</dbReference>
<dbReference type="PROSITE" id="PS50861">
    <property type="entry name" value="AA_TRNA_LIGASE_II_GLYAB"/>
    <property type="match status" value="1"/>
</dbReference>
<keyword id="KW-0030">Aminoacyl-tRNA synthetase</keyword>
<keyword id="KW-0067">ATP-binding</keyword>
<keyword id="KW-0963">Cytoplasm</keyword>
<keyword id="KW-0436">Ligase</keyword>
<keyword id="KW-0547">Nucleotide-binding</keyword>
<keyword id="KW-0648">Protein biosynthesis</keyword>
<keyword id="KW-1185">Reference proteome</keyword>
<organism>
    <name type="scientific">Bradyrhizobium diazoefficiens (strain JCM 10833 / BCRC 13528 / IAM 13628 / NBRC 14792 / USDA 110)</name>
    <dbReference type="NCBI Taxonomy" id="224911"/>
    <lineage>
        <taxon>Bacteria</taxon>
        <taxon>Pseudomonadati</taxon>
        <taxon>Pseudomonadota</taxon>
        <taxon>Alphaproteobacteria</taxon>
        <taxon>Hyphomicrobiales</taxon>
        <taxon>Nitrobacteraceae</taxon>
        <taxon>Bradyrhizobium</taxon>
    </lineage>
</organism>
<comment type="catalytic activity">
    <reaction evidence="1">
        <text>tRNA(Gly) + glycine + ATP = glycyl-tRNA(Gly) + AMP + diphosphate</text>
        <dbReference type="Rhea" id="RHEA:16013"/>
        <dbReference type="Rhea" id="RHEA-COMP:9664"/>
        <dbReference type="Rhea" id="RHEA-COMP:9683"/>
        <dbReference type="ChEBI" id="CHEBI:30616"/>
        <dbReference type="ChEBI" id="CHEBI:33019"/>
        <dbReference type="ChEBI" id="CHEBI:57305"/>
        <dbReference type="ChEBI" id="CHEBI:78442"/>
        <dbReference type="ChEBI" id="CHEBI:78522"/>
        <dbReference type="ChEBI" id="CHEBI:456215"/>
        <dbReference type="EC" id="6.1.1.14"/>
    </reaction>
</comment>
<comment type="subunit">
    <text evidence="1">Tetramer of two alpha and two beta subunits.</text>
</comment>
<comment type="subcellular location">
    <subcellularLocation>
        <location evidence="1">Cytoplasm</location>
    </subcellularLocation>
</comment>
<comment type="similarity">
    <text evidence="1">Belongs to the class-II aminoacyl-tRNA synthetase family.</text>
</comment>
<protein>
    <recommendedName>
        <fullName evidence="1">Glycine--tRNA ligase alpha subunit</fullName>
        <ecNumber evidence="1">6.1.1.14</ecNumber>
    </recommendedName>
    <alternativeName>
        <fullName evidence="1">Glycyl-tRNA synthetase alpha subunit</fullName>
        <shortName evidence="1">GlyRS</shortName>
    </alternativeName>
</protein>
<sequence>MDASLPAHMRPERSFQGFILALQRFWAEQGCVILQPYDMEMGAGTFHPATTLRALGPKPWNAAYVQPSRRPKDGRYGENPNRMQHYYQFQVIMKPSPPNLQELYLKSLAAIGIDSAVHDIRFVEDDWESPTLGAWGLGWECWCDGMEVSQFTYFQQVAGFECAPVAGELTYGLERLAMYVQGVDRVYDLNFNGRDGDAKVTYGDVFLQAEREYSKHNFEVADTAMLFEQFKMAEAACRKYLDAGWREGNRKEHLMALPAYDQCIKASHVFNLLDARGVISVTERQSYILRVRELAKACGEAWIHTEAGGAA</sequence>
<evidence type="ECO:0000255" key="1">
    <source>
        <dbReference type="HAMAP-Rule" id="MF_00254"/>
    </source>
</evidence>
<feature type="chain" id="PRO_1000078521" description="Glycine--tRNA ligase alpha subunit">
    <location>
        <begin position="1"/>
        <end position="311"/>
    </location>
</feature>
<reference key="1">
    <citation type="journal article" date="2002" name="DNA Res.">
        <title>Complete genomic sequence of nitrogen-fixing symbiotic bacterium Bradyrhizobium japonicum USDA110.</title>
        <authorList>
            <person name="Kaneko T."/>
            <person name="Nakamura Y."/>
            <person name="Sato S."/>
            <person name="Minamisawa K."/>
            <person name="Uchiumi T."/>
            <person name="Sasamoto S."/>
            <person name="Watanabe A."/>
            <person name="Idesawa K."/>
            <person name="Iriguchi M."/>
            <person name="Kawashima K."/>
            <person name="Kohara M."/>
            <person name="Matsumoto M."/>
            <person name="Shimpo S."/>
            <person name="Tsuruoka H."/>
            <person name="Wada T."/>
            <person name="Yamada M."/>
            <person name="Tabata S."/>
        </authorList>
    </citation>
    <scope>NUCLEOTIDE SEQUENCE [LARGE SCALE GENOMIC DNA]</scope>
    <source>
        <strain>JCM 10833 / BCRC 13528 / IAM 13628 / NBRC 14792 / USDA 110</strain>
    </source>
</reference>
<accession>Q89S70</accession>
<gene>
    <name evidence="1" type="primary">glyQ</name>
    <name type="ordered locus">blr2535</name>
</gene>
<proteinExistence type="inferred from homology"/>